<protein>
    <recommendedName>
        <fullName evidence="1">L-lactate dehydrogenase</fullName>
        <ecNumber evidence="1">1.1.-.-</ecNumber>
    </recommendedName>
</protein>
<organism>
    <name type="scientific">Xanthomonas euvesicatoria pv. vesicatoria (strain 85-10)</name>
    <name type="common">Xanthomonas campestris pv. vesicatoria</name>
    <dbReference type="NCBI Taxonomy" id="316273"/>
    <lineage>
        <taxon>Bacteria</taxon>
        <taxon>Pseudomonadati</taxon>
        <taxon>Pseudomonadota</taxon>
        <taxon>Gammaproteobacteria</taxon>
        <taxon>Lysobacterales</taxon>
        <taxon>Lysobacteraceae</taxon>
        <taxon>Xanthomonas</taxon>
    </lineage>
</organism>
<proteinExistence type="inferred from homology"/>
<dbReference type="EC" id="1.1.-.-" evidence="1"/>
<dbReference type="EMBL" id="AM039952">
    <property type="protein sequence ID" value="CAJ21741.1"/>
    <property type="molecule type" value="Genomic_DNA"/>
</dbReference>
<dbReference type="RefSeq" id="WP_008573929.1">
    <property type="nucleotide sequence ID" value="NZ_CP017190.1"/>
</dbReference>
<dbReference type="SMR" id="Q3BZH2"/>
<dbReference type="STRING" id="456327.BJD11_22360"/>
<dbReference type="GeneID" id="61777005"/>
<dbReference type="KEGG" id="xcv:XCV0110"/>
<dbReference type="eggNOG" id="COG1304">
    <property type="taxonomic scope" value="Bacteria"/>
</dbReference>
<dbReference type="HOGENOM" id="CLU_020639_0_0_6"/>
<dbReference type="Proteomes" id="UP000007069">
    <property type="component" value="Chromosome"/>
</dbReference>
<dbReference type="GO" id="GO:0005886">
    <property type="term" value="C:plasma membrane"/>
    <property type="evidence" value="ECO:0007669"/>
    <property type="project" value="UniProtKB-SubCell"/>
</dbReference>
<dbReference type="GO" id="GO:0010181">
    <property type="term" value="F:FMN binding"/>
    <property type="evidence" value="ECO:0007669"/>
    <property type="project" value="InterPro"/>
</dbReference>
<dbReference type="GO" id="GO:0004459">
    <property type="term" value="F:L-lactate dehydrogenase activity"/>
    <property type="evidence" value="ECO:0007669"/>
    <property type="project" value="UniProtKB-UniRule"/>
</dbReference>
<dbReference type="GO" id="GO:0009060">
    <property type="term" value="P:aerobic respiration"/>
    <property type="evidence" value="ECO:0007669"/>
    <property type="project" value="TreeGrafter"/>
</dbReference>
<dbReference type="GO" id="GO:0006089">
    <property type="term" value="P:lactate metabolic process"/>
    <property type="evidence" value="ECO:0007669"/>
    <property type="project" value="UniProtKB-UniRule"/>
</dbReference>
<dbReference type="CDD" id="cd02809">
    <property type="entry name" value="alpha_hydroxyacid_oxid_FMN"/>
    <property type="match status" value="1"/>
</dbReference>
<dbReference type="FunFam" id="3.20.20.70:FF:000029">
    <property type="entry name" value="L-lactate dehydrogenase"/>
    <property type="match status" value="1"/>
</dbReference>
<dbReference type="Gene3D" id="3.20.20.70">
    <property type="entry name" value="Aldolase class I"/>
    <property type="match status" value="1"/>
</dbReference>
<dbReference type="HAMAP" id="MF_01559">
    <property type="entry name" value="L_lact_dehydr"/>
    <property type="match status" value="1"/>
</dbReference>
<dbReference type="InterPro" id="IPR013785">
    <property type="entry name" value="Aldolase_TIM"/>
</dbReference>
<dbReference type="InterPro" id="IPR012133">
    <property type="entry name" value="Alpha-hydoxy_acid_DH_FMN"/>
</dbReference>
<dbReference type="InterPro" id="IPR000262">
    <property type="entry name" value="FMN-dep_DH"/>
</dbReference>
<dbReference type="InterPro" id="IPR037396">
    <property type="entry name" value="FMN_HAD"/>
</dbReference>
<dbReference type="InterPro" id="IPR008259">
    <property type="entry name" value="FMN_hydac_DH_AS"/>
</dbReference>
<dbReference type="InterPro" id="IPR020920">
    <property type="entry name" value="LldD"/>
</dbReference>
<dbReference type="NCBIfam" id="NF033901">
    <property type="entry name" value="L_lactate_LldD"/>
    <property type="match status" value="1"/>
</dbReference>
<dbReference type="NCBIfam" id="NF008398">
    <property type="entry name" value="PRK11197.1"/>
    <property type="match status" value="1"/>
</dbReference>
<dbReference type="PANTHER" id="PTHR10578:SF85">
    <property type="entry name" value="L-LACTATE DEHYDROGENASE"/>
    <property type="match status" value="1"/>
</dbReference>
<dbReference type="PANTHER" id="PTHR10578">
    <property type="entry name" value="S -2-HYDROXY-ACID OXIDASE-RELATED"/>
    <property type="match status" value="1"/>
</dbReference>
<dbReference type="Pfam" id="PF01070">
    <property type="entry name" value="FMN_dh"/>
    <property type="match status" value="1"/>
</dbReference>
<dbReference type="PIRSF" id="PIRSF000138">
    <property type="entry name" value="Al-hdrx_acd_dh"/>
    <property type="match status" value="1"/>
</dbReference>
<dbReference type="SUPFAM" id="SSF51395">
    <property type="entry name" value="FMN-linked oxidoreductases"/>
    <property type="match status" value="1"/>
</dbReference>
<dbReference type="PROSITE" id="PS00557">
    <property type="entry name" value="FMN_HYDROXY_ACID_DH_1"/>
    <property type="match status" value="1"/>
</dbReference>
<dbReference type="PROSITE" id="PS51349">
    <property type="entry name" value="FMN_HYDROXY_ACID_DH_2"/>
    <property type="match status" value="1"/>
</dbReference>
<sequence>MIISAASDYRAAAQARLPPFLFHYIDGGAYAEHTLRRNVSDLADVALRQRVLRNMSDLRLSTELFGETLAMPVALAPVGLTGMYARRGEVQAARAAAARGIPFTLSTVSVCPIEEVAPAIERPMWFQLYVLKDRGFMRNALERAKAAGVTTLVFTVDMPTPGARYRDAHSGMSGPNASLRRMLQAVTHPRWAWDVGLLGRPHDLGNISAYRGSPTGLQDYIGWLGANFDPSIAWKDLEWIREFWTGPMVIKGILDPEDARDAVRFGADGIVVSNHGGRQLDGVLSSARALPAIADAVKGELKILADSGIRSGLDVVRMLALGADAVLLGRAFVYALAAAGQAGVENLLTLIEKEMRVAMTLTGTHSIAEISADALSRVTRERAETISP</sequence>
<feature type="chain" id="PRO_0000206357" description="L-lactate dehydrogenase">
    <location>
        <begin position="1"/>
        <end position="388"/>
    </location>
</feature>
<feature type="domain" description="FMN hydroxy acid dehydrogenase" evidence="1">
    <location>
        <begin position="1"/>
        <end position="380"/>
    </location>
</feature>
<feature type="active site" description="Proton acceptor" evidence="1">
    <location>
        <position position="275"/>
    </location>
</feature>
<feature type="binding site" evidence="1">
    <location>
        <position position="24"/>
    </location>
    <ligand>
        <name>substrate</name>
    </ligand>
</feature>
<feature type="binding site" evidence="1">
    <location>
        <position position="106"/>
    </location>
    <ligand>
        <name>FMN</name>
        <dbReference type="ChEBI" id="CHEBI:58210"/>
    </ligand>
</feature>
<feature type="binding site" evidence="1">
    <location>
        <position position="127"/>
    </location>
    <ligand>
        <name>FMN</name>
        <dbReference type="ChEBI" id="CHEBI:58210"/>
    </ligand>
</feature>
<feature type="binding site" evidence="1">
    <location>
        <position position="129"/>
    </location>
    <ligand>
        <name>substrate</name>
    </ligand>
</feature>
<feature type="binding site" evidence="1">
    <location>
        <position position="155"/>
    </location>
    <ligand>
        <name>FMN</name>
        <dbReference type="ChEBI" id="CHEBI:58210"/>
    </ligand>
</feature>
<feature type="binding site" evidence="1">
    <location>
        <position position="164"/>
    </location>
    <ligand>
        <name>substrate</name>
    </ligand>
</feature>
<feature type="binding site" evidence="1">
    <location>
        <position position="251"/>
    </location>
    <ligand>
        <name>FMN</name>
        <dbReference type="ChEBI" id="CHEBI:58210"/>
    </ligand>
</feature>
<feature type="binding site" evidence="1">
    <location>
        <position position="278"/>
    </location>
    <ligand>
        <name>substrate</name>
    </ligand>
</feature>
<feature type="binding site" evidence="1">
    <location>
        <begin position="306"/>
        <end position="330"/>
    </location>
    <ligand>
        <name>FMN</name>
        <dbReference type="ChEBI" id="CHEBI:58210"/>
    </ligand>
</feature>
<keyword id="KW-0997">Cell inner membrane</keyword>
<keyword id="KW-1003">Cell membrane</keyword>
<keyword id="KW-0285">Flavoprotein</keyword>
<keyword id="KW-0288">FMN</keyword>
<keyword id="KW-0472">Membrane</keyword>
<keyword id="KW-0560">Oxidoreductase</keyword>
<evidence type="ECO:0000255" key="1">
    <source>
        <dbReference type="HAMAP-Rule" id="MF_01559"/>
    </source>
</evidence>
<gene>
    <name evidence="1" type="primary">lldD</name>
    <name type="ordered locus">XCV0110</name>
</gene>
<accession>Q3BZH2</accession>
<comment type="function">
    <text evidence="1">Catalyzes the conversion of L-lactate to pyruvate. Is coupled to the respiratory chain.</text>
</comment>
<comment type="catalytic activity">
    <reaction evidence="1">
        <text>(S)-lactate + A = pyruvate + AH2</text>
        <dbReference type="Rhea" id="RHEA:45816"/>
        <dbReference type="ChEBI" id="CHEBI:13193"/>
        <dbReference type="ChEBI" id="CHEBI:15361"/>
        <dbReference type="ChEBI" id="CHEBI:16651"/>
        <dbReference type="ChEBI" id="CHEBI:17499"/>
    </reaction>
</comment>
<comment type="cofactor">
    <cofactor evidence="1">
        <name>FMN</name>
        <dbReference type="ChEBI" id="CHEBI:58210"/>
    </cofactor>
</comment>
<comment type="subcellular location">
    <subcellularLocation>
        <location evidence="1">Cell inner membrane</location>
        <topology evidence="1">Peripheral membrane protein</topology>
    </subcellularLocation>
</comment>
<comment type="similarity">
    <text evidence="1">Belongs to the FMN-dependent alpha-hydroxy acid dehydrogenase family.</text>
</comment>
<reference key="1">
    <citation type="journal article" date="2005" name="J. Bacteriol.">
        <title>Insights into genome plasticity and pathogenicity of the plant pathogenic Bacterium Xanthomonas campestris pv. vesicatoria revealed by the complete genome sequence.</title>
        <authorList>
            <person name="Thieme F."/>
            <person name="Koebnik R."/>
            <person name="Bekel T."/>
            <person name="Berger C."/>
            <person name="Boch J."/>
            <person name="Buettner D."/>
            <person name="Caldana C."/>
            <person name="Gaigalat L."/>
            <person name="Goesmann A."/>
            <person name="Kay S."/>
            <person name="Kirchner O."/>
            <person name="Lanz C."/>
            <person name="Linke B."/>
            <person name="McHardy A.C."/>
            <person name="Meyer F."/>
            <person name="Mittenhuber G."/>
            <person name="Nies D.H."/>
            <person name="Niesbach-Kloesgen U."/>
            <person name="Patschkowski T."/>
            <person name="Rueckert C."/>
            <person name="Rupp O."/>
            <person name="Schneiker S."/>
            <person name="Schuster S.C."/>
            <person name="Vorhoelter F.J."/>
            <person name="Weber E."/>
            <person name="Puehler A."/>
            <person name="Bonas U."/>
            <person name="Bartels D."/>
            <person name="Kaiser O."/>
        </authorList>
    </citation>
    <scope>NUCLEOTIDE SEQUENCE [LARGE SCALE GENOMIC DNA]</scope>
    <source>
        <strain>85-10</strain>
    </source>
</reference>
<name>LLDD_XANE5</name>